<organism>
    <name type="scientific">Arabidopsis thaliana</name>
    <name type="common">Mouse-ear cress</name>
    <dbReference type="NCBI Taxonomy" id="3702"/>
    <lineage>
        <taxon>Eukaryota</taxon>
        <taxon>Viridiplantae</taxon>
        <taxon>Streptophyta</taxon>
        <taxon>Embryophyta</taxon>
        <taxon>Tracheophyta</taxon>
        <taxon>Spermatophyta</taxon>
        <taxon>Magnoliopsida</taxon>
        <taxon>eudicotyledons</taxon>
        <taxon>Gunneridae</taxon>
        <taxon>Pentapetalae</taxon>
        <taxon>rosids</taxon>
        <taxon>malvids</taxon>
        <taxon>Brassicales</taxon>
        <taxon>Brassicaceae</taxon>
        <taxon>Camelineae</taxon>
        <taxon>Arabidopsis</taxon>
    </lineage>
</organism>
<evidence type="ECO:0000250" key="1">
    <source>
        <dbReference type="UniProtKB" id="A0A0A1HA03"/>
    </source>
</evidence>
<evidence type="ECO:0000250" key="2">
    <source>
        <dbReference type="UniProtKB" id="P51094"/>
    </source>
</evidence>
<evidence type="ECO:0000269" key="3">
    <source>
    </source>
</evidence>
<evidence type="ECO:0000269" key="4">
    <source>
    </source>
</evidence>
<evidence type="ECO:0000269" key="5">
    <source>
    </source>
</evidence>
<evidence type="ECO:0000303" key="6">
    <source>
    </source>
</evidence>
<evidence type="ECO:0000303" key="7">
    <source>
    </source>
</evidence>
<evidence type="ECO:0000305" key="8"/>
<evidence type="ECO:0000312" key="9">
    <source>
        <dbReference type="Araport" id="AT4G15480"/>
    </source>
</evidence>
<evidence type="ECO:0000312" key="10">
    <source>
        <dbReference type="EMBL" id="CAB10326.1"/>
    </source>
</evidence>
<evidence type="ECO:0000312" key="11">
    <source>
        <dbReference type="EMBL" id="CAB78590.1"/>
    </source>
</evidence>
<keyword id="KW-0216">Detoxification</keyword>
<keyword id="KW-0328">Glycosyltransferase</keyword>
<keyword id="KW-1185">Reference proteome</keyword>
<keyword id="KW-0808">Transferase</keyword>
<dbReference type="EC" id="2.4.1.120" evidence="3 4"/>
<dbReference type="EC" id="2.4.1.177" evidence="3 4"/>
<dbReference type="EMBL" id="Z97339">
    <property type="protein sequence ID" value="CAB10326.1"/>
    <property type="status" value="ALT_INIT"/>
    <property type="molecule type" value="Genomic_DNA"/>
</dbReference>
<dbReference type="EMBL" id="AL161541">
    <property type="protein sequence ID" value="CAB78590.1"/>
    <property type="status" value="ALT_INIT"/>
    <property type="molecule type" value="Genomic_DNA"/>
</dbReference>
<dbReference type="EMBL" id="CP002687">
    <property type="protein sequence ID" value="AEE83609.1"/>
    <property type="molecule type" value="Genomic_DNA"/>
</dbReference>
<dbReference type="EMBL" id="BT002014">
    <property type="protein sequence ID" value="AAN72025.1"/>
    <property type="molecule type" value="mRNA"/>
</dbReference>
<dbReference type="EMBL" id="BT015796">
    <property type="protein sequence ID" value="AAU93568.1"/>
    <property type="molecule type" value="mRNA"/>
</dbReference>
<dbReference type="PIR" id="D71419">
    <property type="entry name" value="D71419"/>
</dbReference>
<dbReference type="RefSeq" id="NP_193283.2">
    <property type="nucleotide sequence ID" value="NM_117638.3"/>
</dbReference>
<dbReference type="SMR" id="Q5XF20"/>
<dbReference type="FunCoup" id="Q5XF20">
    <property type="interactions" value="169"/>
</dbReference>
<dbReference type="STRING" id="3702.Q5XF20"/>
<dbReference type="CAZy" id="GT1">
    <property type="family name" value="Glycosyltransferase Family 1"/>
</dbReference>
<dbReference type="iPTMnet" id="Q5XF20"/>
<dbReference type="PaxDb" id="3702-AT4G15480.1"/>
<dbReference type="ProteomicsDB" id="228588"/>
<dbReference type="EnsemblPlants" id="AT4G15480.1">
    <property type="protein sequence ID" value="AT4G15480.1"/>
    <property type="gene ID" value="AT4G15480"/>
</dbReference>
<dbReference type="GeneID" id="827220"/>
<dbReference type="Gramene" id="AT4G15480.1">
    <property type="protein sequence ID" value="AT4G15480.1"/>
    <property type="gene ID" value="AT4G15480"/>
</dbReference>
<dbReference type="KEGG" id="ath:AT4G15480"/>
<dbReference type="Araport" id="AT4G15480"/>
<dbReference type="TAIR" id="AT4G15480">
    <property type="gene designation" value="UGT84A1"/>
</dbReference>
<dbReference type="eggNOG" id="KOG1192">
    <property type="taxonomic scope" value="Eukaryota"/>
</dbReference>
<dbReference type="HOGENOM" id="CLU_001724_0_1_1"/>
<dbReference type="InParanoid" id="Q5XF20"/>
<dbReference type="OMA" id="KTGVRMC"/>
<dbReference type="PhylomeDB" id="Q5XF20"/>
<dbReference type="BioCyc" id="ARA:AT4G15480-MONOMER"/>
<dbReference type="SABIO-RK" id="Q5XF20"/>
<dbReference type="PRO" id="PR:Q5XF20"/>
<dbReference type="Proteomes" id="UP000006548">
    <property type="component" value="Chromosome 4"/>
</dbReference>
<dbReference type="ExpressionAtlas" id="Q5XF20">
    <property type="expression patterns" value="baseline and differential"/>
</dbReference>
<dbReference type="GO" id="GO:0050412">
    <property type="term" value="F:cinnamate beta-D-glucosyltransferase activity"/>
    <property type="evidence" value="ECO:0007669"/>
    <property type="project" value="UniProtKB-EC"/>
</dbReference>
<dbReference type="GO" id="GO:0047218">
    <property type="term" value="F:hydroxycinnamate 4-beta-glucosyltransferase activity"/>
    <property type="evidence" value="ECO:0007669"/>
    <property type="project" value="RHEA"/>
</dbReference>
<dbReference type="GO" id="GO:0050284">
    <property type="term" value="F:sinapate 1-glucosyltransferase activity"/>
    <property type="evidence" value="ECO:0000250"/>
    <property type="project" value="TAIR"/>
</dbReference>
<dbReference type="GO" id="GO:0035251">
    <property type="term" value="F:UDP-glucosyltransferase activity"/>
    <property type="evidence" value="ECO:0000314"/>
    <property type="project" value="TAIR"/>
</dbReference>
<dbReference type="GO" id="GO:0009636">
    <property type="term" value="P:response to toxic substance"/>
    <property type="evidence" value="ECO:0007669"/>
    <property type="project" value="UniProtKB-KW"/>
</dbReference>
<dbReference type="GO" id="GO:0010224">
    <property type="term" value="P:response to UV-B"/>
    <property type="evidence" value="ECO:0000316"/>
    <property type="project" value="TAIR"/>
</dbReference>
<dbReference type="CDD" id="cd03784">
    <property type="entry name" value="GT1_Gtf-like"/>
    <property type="match status" value="1"/>
</dbReference>
<dbReference type="FunFam" id="3.40.50.2000:FF:000019">
    <property type="entry name" value="Glycosyltransferase"/>
    <property type="match status" value="1"/>
</dbReference>
<dbReference type="FunFam" id="3.40.50.2000:FF:000101">
    <property type="entry name" value="Glycosyltransferase"/>
    <property type="match status" value="1"/>
</dbReference>
<dbReference type="Gene3D" id="3.40.50.2000">
    <property type="entry name" value="Glycogen Phosphorylase B"/>
    <property type="match status" value="2"/>
</dbReference>
<dbReference type="InterPro" id="IPR002213">
    <property type="entry name" value="UDP_glucos_trans"/>
</dbReference>
<dbReference type="InterPro" id="IPR035595">
    <property type="entry name" value="UDP_glycos_trans_CS"/>
</dbReference>
<dbReference type="PANTHER" id="PTHR11926">
    <property type="entry name" value="GLUCOSYL/GLUCURONOSYL TRANSFERASES"/>
    <property type="match status" value="1"/>
</dbReference>
<dbReference type="PANTHER" id="PTHR11926:SF986">
    <property type="entry name" value="UDP-GLYCOSYLTRANSFERASE 84A1"/>
    <property type="match status" value="1"/>
</dbReference>
<dbReference type="Pfam" id="PF00201">
    <property type="entry name" value="UDPGT"/>
    <property type="match status" value="1"/>
</dbReference>
<dbReference type="SUPFAM" id="SSF53756">
    <property type="entry name" value="UDP-Glycosyltransferase/glycogen phosphorylase"/>
    <property type="match status" value="1"/>
</dbReference>
<dbReference type="PROSITE" id="PS00375">
    <property type="entry name" value="UDPGT"/>
    <property type="match status" value="1"/>
</dbReference>
<comment type="function">
    <text evidence="3 4 5">UDP-glucosyltransferase that forms glucose esters with phenylpropanoids (PubMed:11042211, PubMed:11187886). Glucosylates 4-coumarate, ferulate, caffeate, sinapate and cinnamate (PubMed:11042211, PubMed:11187886). Can glucosylate the phytotoxic xenobiotic compound 2,4,5-trichlorophenol (TCP) (PubMed:12721858).</text>
</comment>
<comment type="catalytic activity">
    <reaction evidence="3 4">
        <text>(E)-4-coumarate + UDP-alpha-D-glucose = 4-O-(beta-D-glucosyl)-trans-4-coumarate + UDP + H(+)</text>
        <dbReference type="Rhea" id="RHEA:21636"/>
        <dbReference type="ChEBI" id="CHEBI:12876"/>
        <dbReference type="ChEBI" id="CHEBI:15378"/>
        <dbReference type="ChEBI" id="CHEBI:58223"/>
        <dbReference type="ChEBI" id="CHEBI:58885"/>
        <dbReference type="ChEBI" id="CHEBI:79066"/>
    </reaction>
</comment>
<comment type="catalytic activity">
    <reaction evidence="3 4">
        <text>(E)-ferulate + UDP-alpha-D-glucose = 1-O-[(E)-feruloyl]-beta-D-glucose + UDP</text>
        <dbReference type="Rhea" id="RHEA:57468"/>
        <dbReference type="ChEBI" id="CHEBI:29749"/>
        <dbReference type="ChEBI" id="CHEBI:58223"/>
        <dbReference type="ChEBI" id="CHEBI:58885"/>
        <dbReference type="ChEBI" id="CHEBI:81321"/>
    </reaction>
</comment>
<comment type="catalytic activity">
    <reaction evidence="3 4">
        <text>(E)-caffeate + UDP-alpha-D-glucose = 1-O-[(E)-caffeoyl]-beta-D-glucose + UDP</text>
        <dbReference type="Rhea" id="RHEA:57464"/>
        <dbReference type="ChEBI" id="CHEBI:614"/>
        <dbReference type="ChEBI" id="CHEBI:57770"/>
        <dbReference type="ChEBI" id="CHEBI:58223"/>
        <dbReference type="ChEBI" id="CHEBI:58885"/>
    </reaction>
</comment>
<comment type="catalytic activity">
    <reaction evidence="3 4">
        <text>(E)-sinapate + UDP-alpha-D-glucose = 1-O-(trans-sinapoyl)-beta-D-glucose + UDP</text>
        <dbReference type="Rhea" id="RHEA:13305"/>
        <dbReference type="ChEBI" id="CHEBI:16546"/>
        <dbReference type="ChEBI" id="CHEBI:30023"/>
        <dbReference type="ChEBI" id="CHEBI:58223"/>
        <dbReference type="ChEBI" id="CHEBI:58885"/>
        <dbReference type="EC" id="2.4.1.120"/>
    </reaction>
</comment>
<comment type="catalytic activity">
    <reaction evidence="3 4">
        <text>(E)-cinnamate + UDP-alpha-D-glucose = 1-O-(trans-cinnamoyl)-beta-D-glucose + UDP</text>
        <dbReference type="Rhea" id="RHEA:13437"/>
        <dbReference type="ChEBI" id="CHEBI:15669"/>
        <dbReference type="ChEBI" id="CHEBI:16279"/>
        <dbReference type="ChEBI" id="CHEBI:58223"/>
        <dbReference type="ChEBI" id="CHEBI:58885"/>
        <dbReference type="EC" id="2.4.1.177"/>
    </reaction>
</comment>
<comment type="biophysicochemical properties">
    <kinetics>
        <KM evidence="3">400 uM for 4-coumarate</KM>
        <KM evidence="3">340 uM for ferulate</KM>
        <KM evidence="3">180 uM for caffeate</KM>
        <KM evidence="3">580 uM for sinapate</KM>
        <KM evidence="3">710 uM for cinnamate</KM>
    </kinetics>
</comment>
<comment type="tissue specificity">
    <text evidence="5">Expressed in roots, flowers and siliques.</text>
</comment>
<comment type="similarity">
    <text evidence="8">Belongs to the UDP-glycosyltransferase family.</text>
</comment>
<comment type="sequence caution" evidence="8">
    <conflict type="erroneous initiation">
        <sequence resource="EMBL-CDS" id="CAB10326"/>
    </conflict>
    <text>Truncated N-terminus.</text>
</comment>
<comment type="sequence caution" evidence="8">
    <conflict type="erroneous initiation">
        <sequence resource="EMBL-CDS" id="CAB78590"/>
    </conflict>
    <text>Truncated N-terminus.</text>
</comment>
<proteinExistence type="evidence at protein level"/>
<protein>
    <recommendedName>
        <fullName evidence="6">UDP-glycosyltransferase 84A1</fullName>
        <ecNumber evidence="3 4">2.4.1.120</ecNumber>
        <ecNumber evidence="3 4">2.4.1.177</ecNumber>
    </recommendedName>
    <alternativeName>
        <fullName evidence="7">Hydroxycinnamate glucosyltransferase 2</fullName>
        <shortName evidence="7">AtHCAGT2</shortName>
    </alternativeName>
</protein>
<gene>
    <name evidence="6" type="primary">UGT84A1</name>
    <name evidence="9" type="ordered locus">At4g15480</name>
    <name evidence="10" type="ORF">dl3780c</name>
    <name evidence="11" type="ORF">FCAALL.304</name>
</gene>
<feature type="chain" id="PRO_0000409120" description="UDP-glycosyltransferase 84A1">
    <location>
        <begin position="1"/>
        <end position="490"/>
    </location>
</feature>
<feature type="active site" description="Proton acceptor" evidence="1">
    <location>
        <position position="30"/>
    </location>
</feature>
<feature type="binding site" evidence="2">
    <location>
        <position position="30"/>
    </location>
    <ligand>
        <name>an anthocyanidin</name>
        <dbReference type="ChEBI" id="CHEBI:143576"/>
    </ligand>
</feature>
<feature type="binding site" evidence="1">
    <location>
        <position position="358"/>
    </location>
    <ligand>
        <name>UDP-alpha-D-glucose</name>
        <dbReference type="ChEBI" id="CHEBI:58885"/>
    </ligand>
</feature>
<feature type="binding site" evidence="1">
    <location>
        <position position="373"/>
    </location>
    <ligand>
        <name>UDP-alpha-D-glucose</name>
        <dbReference type="ChEBI" id="CHEBI:58885"/>
    </ligand>
</feature>
<feature type="binding site" evidence="1">
    <location>
        <position position="376"/>
    </location>
    <ligand>
        <name>UDP-alpha-D-glucose</name>
        <dbReference type="ChEBI" id="CHEBI:58885"/>
    </ligand>
</feature>
<feature type="binding site" evidence="1">
    <location>
        <position position="377"/>
    </location>
    <ligand>
        <name>UDP-alpha-D-glucose</name>
        <dbReference type="ChEBI" id="CHEBI:58885"/>
    </ligand>
</feature>
<feature type="binding site" evidence="1">
    <location>
        <position position="378"/>
    </location>
    <ligand>
        <name>UDP-alpha-D-glucose</name>
        <dbReference type="ChEBI" id="CHEBI:58885"/>
    </ligand>
</feature>
<feature type="binding site" evidence="1">
    <location>
        <position position="381"/>
    </location>
    <ligand>
        <name>UDP-alpha-D-glucose</name>
        <dbReference type="ChEBI" id="CHEBI:58885"/>
    </ligand>
</feature>
<feature type="binding site" evidence="2">
    <location>
        <position position="396"/>
    </location>
    <ligand>
        <name>an anthocyanidin</name>
        <dbReference type="ChEBI" id="CHEBI:143576"/>
    </ligand>
</feature>
<feature type="binding site" evidence="1">
    <location>
        <position position="397"/>
    </location>
    <ligand>
        <name>UDP-alpha-D-glucose</name>
        <dbReference type="ChEBI" id="CHEBI:58885"/>
    </ligand>
</feature>
<feature type="binding site" evidence="1">
    <location>
        <position position="398"/>
    </location>
    <ligand>
        <name>UDP-alpha-D-glucose</name>
        <dbReference type="ChEBI" id="CHEBI:58885"/>
    </ligand>
</feature>
<feature type="sequence conflict" description="In Ref. 4; AAN72025." evidence="8" ref="4">
    <original>Q</original>
    <variation>R</variation>
    <location>
        <position position="237"/>
    </location>
</feature>
<name>U84A1_ARATH</name>
<accession>Q5XF20</accession>
<accession>O23400</accession>
<accession>Q8H0V7</accession>
<reference key="1">
    <citation type="journal article" date="1998" name="Nature">
        <title>Analysis of 1.9 Mb of contiguous sequence from chromosome 4 of Arabidopsis thaliana.</title>
        <authorList>
            <person name="Bevan M."/>
            <person name="Bancroft I."/>
            <person name="Bent E."/>
            <person name="Love K."/>
            <person name="Goodman H.M."/>
            <person name="Dean C."/>
            <person name="Bergkamp R."/>
            <person name="Dirkse W."/>
            <person name="van Staveren M."/>
            <person name="Stiekema W."/>
            <person name="Drost L."/>
            <person name="Ridley P."/>
            <person name="Hudson S.-A."/>
            <person name="Patel K."/>
            <person name="Murphy G."/>
            <person name="Piffanelli P."/>
            <person name="Wedler H."/>
            <person name="Wedler E."/>
            <person name="Wambutt R."/>
            <person name="Weitzenegger T."/>
            <person name="Pohl T."/>
            <person name="Terryn N."/>
            <person name="Gielen J."/>
            <person name="Villarroel R."/>
            <person name="De Clercq R."/>
            <person name="van Montagu M."/>
            <person name="Lecharny A."/>
            <person name="Aubourg S."/>
            <person name="Gy I."/>
            <person name="Kreis M."/>
            <person name="Lao N."/>
            <person name="Kavanagh T."/>
            <person name="Hempel S."/>
            <person name="Kotter P."/>
            <person name="Entian K.-D."/>
            <person name="Rieger M."/>
            <person name="Schaefer M."/>
            <person name="Funk B."/>
            <person name="Mueller-Auer S."/>
            <person name="Silvey M."/>
            <person name="James R."/>
            <person name="Monfort A."/>
            <person name="Pons A."/>
            <person name="Puigdomenech P."/>
            <person name="Douka A."/>
            <person name="Voukelatou E."/>
            <person name="Milioni D."/>
            <person name="Hatzopoulos P."/>
            <person name="Piravandi E."/>
            <person name="Obermaier B."/>
            <person name="Hilbert H."/>
            <person name="Duesterhoeft A."/>
            <person name="Moores T."/>
            <person name="Jones J.D.G."/>
            <person name="Eneva T."/>
            <person name="Palme K."/>
            <person name="Benes V."/>
            <person name="Rechmann S."/>
            <person name="Ansorge W."/>
            <person name="Cooke R."/>
            <person name="Berger C."/>
            <person name="Delseny M."/>
            <person name="Voet M."/>
            <person name="Volckaert G."/>
            <person name="Mewes H.-W."/>
            <person name="Klosterman S."/>
            <person name="Schueller C."/>
            <person name="Chalwatzis N."/>
        </authorList>
    </citation>
    <scope>NUCLEOTIDE SEQUENCE [LARGE SCALE GENOMIC DNA]</scope>
    <source>
        <strain>cv. Columbia</strain>
    </source>
</reference>
<reference key="2">
    <citation type="journal article" date="1999" name="Nature">
        <title>Sequence and analysis of chromosome 4 of the plant Arabidopsis thaliana.</title>
        <authorList>
            <person name="Mayer K.F.X."/>
            <person name="Schueller C."/>
            <person name="Wambutt R."/>
            <person name="Murphy G."/>
            <person name="Volckaert G."/>
            <person name="Pohl T."/>
            <person name="Duesterhoeft A."/>
            <person name="Stiekema W."/>
            <person name="Entian K.-D."/>
            <person name="Terryn N."/>
            <person name="Harris B."/>
            <person name="Ansorge W."/>
            <person name="Brandt P."/>
            <person name="Grivell L.A."/>
            <person name="Rieger M."/>
            <person name="Weichselgartner M."/>
            <person name="de Simone V."/>
            <person name="Obermaier B."/>
            <person name="Mache R."/>
            <person name="Mueller M."/>
            <person name="Kreis M."/>
            <person name="Delseny M."/>
            <person name="Puigdomenech P."/>
            <person name="Watson M."/>
            <person name="Schmidtheini T."/>
            <person name="Reichert B."/>
            <person name="Portetelle D."/>
            <person name="Perez-Alonso M."/>
            <person name="Boutry M."/>
            <person name="Bancroft I."/>
            <person name="Vos P."/>
            <person name="Hoheisel J."/>
            <person name="Zimmermann W."/>
            <person name="Wedler H."/>
            <person name="Ridley P."/>
            <person name="Langham S.-A."/>
            <person name="McCullagh B."/>
            <person name="Bilham L."/>
            <person name="Robben J."/>
            <person name="van der Schueren J."/>
            <person name="Grymonprez B."/>
            <person name="Chuang Y.-J."/>
            <person name="Vandenbussche F."/>
            <person name="Braeken M."/>
            <person name="Weltjens I."/>
            <person name="Voet M."/>
            <person name="Bastiaens I."/>
            <person name="Aert R."/>
            <person name="Defoor E."/>
            <person name="Weitzenegger T."/>
            <person name="Bothe G."/>
            <person name="Ramsperger U."/>
            <person name="Hilbert H."/>
            <person name="Braun M."/>
            <person name="Holzer E."/>
            <person name="Brandt A."/>
            <person name="Peters S."/>
            <person name="van Staveren M."/>
            <person name="Dirkse W."/>
            <person name="Mooijman P."/>
            <person name="Klein Lankhorst R."/>
            <person name="Rose M."/>
            <person name="Hauf J."/>
            <person name="Koetter P."/>
            <person name="Berneiser S."/>
            <person name="Hempel S."/>
            <person name="Feldpausch M."/>
            <person name="Lamberth S."/>
            <person name="Van den Daele H."/>
            <person name="De Keyser A."/>
            <person name="Buysshaert C."/>
            <person name="Gielen J."/>
            <person name="Villarroel R."/>
            <person name="De Clercq R."/>
            <person name="van Montagu M."/>
            <person name="Rogers J."/>
            <person name="Cronin A."/>
            <person name="Quail M.A."/>
            <person name="Bray-Allen S."/>
            <person name="Clark L."/>
            <person name="Doggett J."/>
            <person name="Hall S."/>
            <person name="Kay M."/>
            <person name="Lennard N."/>
            <person name="McLay K."/>
            <person name="Mayes R."/>
            <person name="Pettett A."/>
            <person name="Rajandream M.A."/>
            <person name="Lyne M."/>
            <person name="Benes V."/>
            <person name="Rechmann S."/>
            <person name="Borkova D."/>
            <person name="Bloecker H."/>
            <person name="Scharfe M."/>
            <person name="Grimm M."/>
            <person name="Loehnert T.-H."/>
            <person name="Dose S."/>
            <person name="de Haan M."/>
            <person name="Maarse A.C."/>
            <person name="Schaefer M."/>
            <person name="Mueller-Auer S."/>
            <person name="Gabel C."/>
            <person name="Fuchs M."/>
            <person name="Fartmann B."/>
            <person name="Granderath K."/>
            <person name="Dauner D."/>
            <person name="Herzl A."/>
            <person name="Neumann S."/>
            <person name="Argiriou A."/>
            <person name="Vitale D."/>
            <person name="Liguori R."/>
            <person name="Piravandi E."/>
            <person name="Massenet O."/>
            <person name="Quigley F."/>
            <person name="Clabauld G."/>
            <person name="Muendlein A."/>
            <person name="Felber R."/>
            <person name="Schnabl S."/>
            <person name="Hiller R."/>
            <person name="Schmidt W."/>
            <person name="Lecharny A."/>
            <person name="Aubourg S."/>
            <person name="Chefdor F."/>
            <person name="Cooke R."/>
            <person name="Berger C."/>
            <person name="Monfort A."/>
            <person name="Casacuberta E."/>
            <person name="Gibbons T."/>
            <person name="Weber N."/>
            <person name="Vandenbol M."/>
            <person name="Bargues M."/>
            <person name="Terol J."/>
            <person name="Torres A."/>
            <person name="Perez-Perez A."/>
            <person name="Purnelle B."/>
            <person name="Bent E."/>
            <person name="Johnson S."/>
            <person name="Tacon D."/>
            <person name="Jesse T."/>
            <person name="Heijnen L."/>
            <person name="Schwarz S."/>
            <person name="Scholler P."/>
            <person name="Heber S."/>
            <person name="Francs P."/>
            <person name="Bielke C."/>
            <person name="Frishman D."/>
            <person name="Haase D."/>
            <person name="Lemcke K."/>
            <person name="Mewes H.-W."/>
            <person name="Stocker S."/>
            <person name="Zaccaria P."/>
            <person name="Bevan M."/>
            <person name="Wilson R.K."/>
            <person name="de la Bastide M."/>
            <person name="Habermann K."/>
            <person name="Parnell L."/>
            <person name="Dedhia N."/>
            <person name="Gnoj L."/>
            <person name="Schutz K."/>
            <person name="Huang E."/>
            <person name="Spiegel L."/>
            <person name="Sekhon M."/>
            <person name="Murray J."/>
            <person name="Sheet P."/>
            <person name="Cordes M."/>
            <person name="Abu-Threideh J."/>
            <person name="Stoneking T."/>
            <person name="Kalicki J."/>
            <person name="Graves T."/>
            <person name="Harmon G."/>
            <person name="Edwards J."/>
            <person name="Latreille P."/>
            <person name="Courtney L."/>
            <person name="Cloud J."/>
            <person name="Abbott A."/>
            <person name="Scott K."/>
            <person name="Johnson D."/>
            <person name="Minx P."/>
            <person name="Bentley D."/>
            <person name="Fulton B."/>
            <person name="Miller N."/>
            <person name="Greco T."/>
            <person name="Kemp K."/>
            <person name="Kramer J."/>
            <person name="Fulton L."/>
            <person name="Mardis E."/>
            <person name="Dante M."/>
            <person name="Pepin K."/>
            <person name="Hillier L.W."/>
            <person name="Nelson J."/>
            <person name="Spieth J."/>
            <person name="Ryan E."/>
            <person name="Andrews S."/>
            <person name="Geisel C."/>
            <person name="Layman D."/>
            <person name="Du H."/>
            <person name="Ali J."/>
            <person name="Berghoff A."/>
            <person name="Jones K."/>
            <person name="Drone K."/>
            <person name="Cotton M."/>
            <person name="Joshu C."/>
            <person name="Antonoiu B."/>
            <person name="Zidanic M."/>
            <person name="Strong C."/>
            <person name="Sun H."/>
            <person name="Lamar B."/>
            <person name="Yordan C."/>
            <person name="Ma P."/>
            <person name="Zhong J."/>
            <person name="Preston R."/>
            <person name="Vil D."/>
            <person name="Shekher M."/>
            <person name="Matero A."/>
            <person name="Shah R."/>
            <person name="Swaby I.K."/>
            <person name="O'Shaughnessy A."/>
            <person name="Rodriguez M."/>
            <person name="Hoffman J."/>
            <person name="Till S."/>
            <person name="Granat S."/>
            <person name="Shohdy N."/>
            <person name="Hasegawa A."/>
            <person name="Hameed A."/>
            <person name="Lodhi M."/>
            <person name="Johnson A."/>
            <person name="Chen E."/>
            <person name="Marra M.A."/>
            <person name="Martienssen R."/>
            <person name="McCombie W.R."/>
        </authorList>
    </citation>
    <scope>NUCLEOTIDE SEQUENCE [LARGE SCALE GENOMIC DNA]</scope>
    <source>
        <strain>cv. Columbia</strain>
    </source>
</reference>
<reference key="3">
    <citation type="journal article" date="2017" name="Plant J.">
        <title>Araport11: a complete reannotation of the Arabidopsis thaliana reference genome.</title>
        <authorList>
            <person name="Cheng C.Y."/>
            <person name="Krishnakumar V."/>
            <person name="Chan A.P."/>
            <person name="Thibaud-Nissen F."/>
            <person name="Schobel S."/>
            <person name="Town C.D."/>
        </authorList>
    </citation>
    <scope>GENOME REANNOTATION</scope>
    <source>
        <strain>cv. Columbia</strain>
    </source>
</reference>
<reference key="4">
    <citation type="journal article" date="2003" name="Science">
        <title>Empirical analysis of transcriptional activity in the Arabidopsis genome.</title>
        <authorList>
            <person name="Yamada K."/>
            <person name="Lim J."/>
            <person name="Dale J.M."/>
            <person name="Chen H."/>
            <person name="Shinn P."/>
            <person name="Palm C.J."/>
            <person name="Southwick A.M."/>
            <person name="Wu H.C."/>
            <person name="Kim C.J."/>
            <person name="Nguyen M."/>
            <person name="Pham P.K."/>
            <person name="Cheuk R.F."/>
            <person name="Karlin-Newmann G."/>
            <person name="Liu S.X."/>
            <person name="Lam B."/>
            <person name="Sakano H."/>
            <person name="Wu T."/>
            <person name="Yu G."/>
            <person name="Miranda M."/>
            <person name="Quach H.L."/>
            <person name="Tripp M."/>
            <person name="Chang C.H."/>
            <person name="Lee J.M."/>
            <person name="Toriumi M.J."/>
            <person name="Chan M.M."/>
            <person name="Tang C.C."/>
            <person name="Onodera C.S."/>
            <person name="Deng J.M."/>
            <person name="Akiyama K."/>
            <person name="Ansari Y."/>
            <person name="Arakawa T."/>
            <person name="Banh J."/>
            <person name="Banno F."/>
            <person name="Bowser L."/>
            <person name="Brooks S.Y."/>
            <person name="Carninci P."/>
            <person name="Chao Q."/>
            <person name="Choy N."/>
            <person name="Enju A."/>
            <person name="Goldsmith A.D."/>
            <person name="Gurjal M."/>
            <person name="Hansen N.F."/>
            <person name="Hayashizaki Y."/>
            <person name="Johnson-Hopson C."/>
            <person name="Hsuan V.W."/>
            <person name="Iida K."/>
            <person name="Karnes M."/>
            <person name="Khan S."/>
            <person name="Koesema E."/>
            <person name="Ishida J."/>
            <person name="Jiang P.X."/>
            <person name="Jones T."/>
            <person name="Kawai J."/>
            <person name="Kamiya A."/>
            <person name="Meyers C."/>
            <person name="Nakajima M."/>
            <person name="Narusaka M."/>
            <person name="Seki M."/>
            <person name="Sakurai T."/>
            <person name="Satou M."/>
            <person name="Tamse R."/>
            <person name="Vaysberg M."/>
            <person name="Wallender E.K."/>
            <person name="Wong C."/>
            <person name="Yamamura Y."/>
            <person name="Yuan S."/>
            <person name="Shinozaki K."/>
            <person name="Davis R.W."/>
            <person name="Theologis A."/>
            <person name="Ecker J.R."/>
        </authorList>
    </citation>
    <scope>NUCLEOTIDE SEQUENCE [LARGE SCALE MRNA]</scope>
    <source>
        <strain>cv. Columbia</strain>
    </source>
</reference>
<reference key="5">
    <citation type="submission" date="2004-10" db="EMBL/GenBank/DDBJ databases">
        <title>Arabidopsis ORF clones.</title>
        <authorList>
            <person name="Shinn P."/>
            <person name="Chen H."/>
            <person name="Cheuk R.F."/>
            <person name="Kim C.J."/>
            <person name="Ecker J.R."/>
        </authorList>
    </citation>
    <scope>NUCLEOTIDE SEQUENCE [LARGE SCALE MRNA]</scope>
    <source>
        <strain>cv. Columbia</strain>
    </source>
</reference>
<reference key="6">
    <citation type="journal article" date="2000" name="FEBS Lett.">
        <title>Identification of four Arabidopsis genes encoding hydroxycinnamate glucosyltransferases.</title>
        <authorList>
            <person name="Milkowski C."/>
            <person name="Baumert A."/>
            <person name="Strack D."/>
        </authorList>
    </citation>
    <scope>FUNCTION</scope>
    <scope>CATALYTIC ACTIVITY</scope>
</reference>
<reference key="7">
    <citation type="journal article" date="2001" name="J. Biol. Chem.">
        <title>Phylogenetic analysis of the UDP-glycosyltransferase multigene family of Arabidopsis thaliana.</title>
        <authorList>
            <person name="Li Y."/>
            <person name="Baldauf S."/>
            <person name="Lim E.K."/>
            <person name="Bowles D.J."/>
        </authorList>
    </citation>
    <scope>GENE FAMILY</scope>
</reference>
<reference key="8">
    <citation type="journal article" date="2001" name="J. Biol. Chem.">
        <title>Identification of glucosyltransferase genes involved in sinapate metabolism and lignin synthesis in Arabidopsis.</title>
        <authorList>
            <person name="Lim E.K."/>
            <person name="Li Y."/>
            <person name="Parr A."/>
            <person name="Jackson R."/>
            <person name="Ashford D.A."/>
            <person name="Bowles D.J."/>
        </authorList>
    </citation>
    <scope>FUNCTION</scope>
    <scope>CATALYTIC ACTIVITY</scope>
    <scope>BIOPHYSICOCHEMICAL PROPERTIES</scope>
</reference>
<reference key="9">
    <citation type="journal article" date="2003" name="Planta">
        <title>Arabidopsis glucosyltransferases with activities toward both endogenous and xenobiotic substrates.</title>
        <authorList>
            <person name="Messner B."/>
            <person name="Thulke O."/>
            <person name="Schaeffner A.R."/>
        </authorList>
    </citation>
    <scope>FUNCTION</scope>
    <scope>TISSUE SPECIFICITY</scope>
</reference>
<sequence length="490" mass="54481">MGSISEMVFETCPSPNPIHVMLVSFQGQGHVNPLLRLGKLIASKGLLVTFVTTELWGKKMRQANKIVDGELKPVGSGSIRFEFFDEEWAEDDDRRADFSLYIAHLESVGIREVSKLVRRYEEANEPVSCLINNPFIPWVCHVAEEFNIPCAVLWVQSCACFSAYYHYQDGSVSFPTETEPELDVKLPCVPVLKNDEIPSFLHPSSRFTGFRQAILGQFKNLSKSFCVLIDSFDSLEQEVIDYMSSLCPVKTVGPLFKVARTVTSDVSGDICKSTDKCLEWLDSRPKSSVVYISFGTVAYLKQEQIEEIAHGVLKSGLSFLWVIRPPPHDLKVETHVLPQELKESSAKGKGMIVDWCPQEQVLSHPSVACFVTHCGWNSTMESLSSGVPVVCCPQWGDQVTDAVYLIDVFKTGVRLGRGATEERVVPREEVAEKLLEATVGEKAEELRKNALKWKAEAEAAVAPGGSSDKNFREFVEKLGAGVTKTKDNGY</sequence>